<accession>Q9KVU4</accession>
<comment type="function">
    <text evidence="1">Attaches a formyl group to the free amino group of methionyl-tRNA(fMet). The formyl group appears to play a dual role in the initiator identity of N-formylmethionyl-tRNA by promoting its recognition by IF2 and preventing the misappropriation of this tRNA by the elongation apparatus.</text>
</comment>
<comment type="catalytic activity">
    <reaction evidence="1">
        <text>L-methionyl-tRNA(fMet) + (6R)-10-formyltetrahydrofolate = N-formyl-L-methionyl-tRNA(fMet) + (6S)-5,6,7,8-tetrahydrofolate + H(+)</text>
        <dbReference type="Rhea" id="RHEA:24380"/>
        <dbReference type="Rhea" id="RHEA-COMP:9952"/>
        <dbReference type="Rhea" id="RHEA-COMP:9953"/>
        <dbReference type="ChEBI" id="CHEBI:15378"/>
        <dbReference type="ChEBI" id="CHEBI:57453"/>
        <dbReference type="ChEBI" id="CHEBI:78530"/>
        <dbReference type="ChEBI" id="CHEBI:78844"/>
        <dbReference type="ChEBI" id="CHEBI:195366"/>
        <dbReference type="EC" id="2.1.2.9"/>
    </reaction>
</comment>
<comment type="similarity">
    <text evidence="1 2">Belongs to the Fmt family.</text>
</comment>
<proteinExistence type="evidence at protein level"/>
<reference key="1">
    <citation type="journal article" date="2000" name="Nature">
        <title>DNA sequence of both chromosomes of the cholera pathogen Vibrio cholerae.</title>
        <authorList>
            <person name="Heidelberg J.F."/>
            <person name="Eisen J.A."/>
            <person name="Nelson W.C."/>
            <person name="Clayton R.A."/>
            <person name="Gwinn M.L."/>
            <person name="Dodson R.J."/>
            <person name="Haft D.H."/>
            <person name="Hickey E.K."/>
            <person name="Peterson J.D."/>
            <person name="Umayam L.A."/>
            <person name="Gill S.R."/>
            <person name="Nelson K.E."/>
            <person name="Read T.D."/>
            <person name="Tettelin H."/>
            <person name="Richardson D.L."/>
            <person name="Ermolaeva M.D."/>
            <person name="Vamathevan J.J."/>
            <person name="Bass S."/>
            <person name="Qin H."/>
            <person name="Dragoi I."/>
            <person name="Sellers P."/>
            <person name="McDonald L.A."/>
            <person name="Utterback T.R."/>
            <person name="Fleischmann R.D."/>
            <person name="Nierman W.C."/>
            <person name="White O."/>
            <person name="Salzberg S.L."/>
            <person name="Smith H.O."/>
            <person name="Colwell R.R."/>
            <person name="Mekalanos J.J."/>
            <person name="Venter J.C."/>
            <person name="Fraser C.M."/>
        </authorList>
    </citation>
    <scope>NUCLEOTIDE SEQUENCE [LARGE SCALE GENOMIC DNA]</scope>
    <source>
        <strain>ATCC 39315 / El Tor Inaba N16961</strain>
    </source>
</reference>
<name>FMT_VIBCH</name>
<gene>
    <name evidence="1" type="primary">fmt</name>
    <name type="ordered locus">VC_0045</name>
</gene>
<evidence type="ECO:0000255" key="1">
    <source>
        <dbReference type="HAMAP-Rule" id="MF_00182"/>
    </source>
</evidence>
<evidence type="ECO:0000305" key="2"/>
<evidence type="ECO:0007829" key="3">
    <source>
        <dbReference type="PDB" id="3Q0I"/>
    </source>
</evidence>
<feature type="chain" id="PRO_0000083080" description="Methionyl-tRNA formyltransferase">
    <location>
        <begin position="1"/>
        <end position="315"/>
    </location>
</feature>
<feature type="binding site" evidence="1">
    <location>
        <begin position="113"/>
        <end position="116"/>
    </location>
    <ligand>
        <name>(6S)-5,6,7,8-tetrahydrofolate</name>
        <dbReference type="ChEBI" id="CHEBI:57453"/>
    </ligand>
</feature>
<feature type="strand" evidence="3">
    <location>
        <begin position="6"/>
        <end position="10"/>
    </location>
</feature>
<feature type="helix" evidence="3">
    <location>
        <begin position="14"/>
        <end position="24"/>
    </location>
</feature>
<feature type="strand" evidence="3">
    <location>
        <begin position="26"/>
        <end position="34"/>
    </location>
</feature>
<feature type="helix" evidence="3">
    <location>
        <begin position="51"/>
        <end position="58"/>
    </location>
</feature>
<feature type="helix" evidence="3">
    <location>
        <begin position="72"/>
        <end position="79"/>
    </location>
</feature>
<feature type="strand" evidence="3">
    <location>
        <begin position="84"/>
        <end position="90"/>
    </location>
</feature>
<feature type="helix" evidence="3">
    <location>
        <begin position="97"/>
        <end position="100"/>
    </location>
</feature>
<feature type="strand" evidence="3">
    <location>
        <begin position="107"/>
        <end position="114"/>
    </location>
</feature>
<feature type="turn" evidence="3">
    <location>
        <begin position="115"/>
        <end position="118"/>
    </location>
</feature>
<feature type="strand" evidence="3">
    <location>
        <begin position="119"/>
        <end position="121"/>
    </location>
</feature>
<feature type="helix" evidence="3">
    <location>
        <begin position="123"/>
        <end position="130"/>
    </location>
</feature>
<feature type="strand" evidence="3">
    <location>
        <begin position="133"/>
        <end position="141"/>
    </location>
</feature>
<feature type="strand" evidence="3">
    <location>
        <begin position="144"/>
        <end position="147"/>
    </location>
</feature>
<feature type="strand" evidence="3">
    <location>
        <begin position="151"/>
        <end position="158"/>
    </location>
</feature>
<feature type="helix" evidence="3">
    <location>
        <begin position="165"/>
        <end position="188"/>
    </location>
</feature>
<feature type="helix" evidence="3">
    <location>
        <begin position="199"/>
        <end position="201"/>
    </location>
</feature>
<feature type="helix" evidence="3">
    <location>
        <begin position="210"/>
        <end position="213"/>
    </location>
</feature>
<feature type="helix" evidence="3">
    <location>
        <begin position="221"/>
        <end position="230"/>
    </location>
</feature>
<feature type="turn" evidence="3">
    <location>
        <begin position="231"/>
        <end position="235"/>
    </location>
</feature>
<feature type="strand" evidence="3">
    <location>
        <begin position="238"/>
        <end position="241"/>
    </location>
</feature>
<feature type="strand" evidence="3">
    <location>
        <begin position="244"/>
        <end position="254"/>
    </location>
</feature>
<feature type="strand" evidence="3">
    <location>
        <begin position="264"/>
        <end position="269"/>
    </location>
</feature>
<feature type="strand" evidence="3">
    <location>
        <begin position="272"/>
        <end position="276"/>
    </location>
</feature>
<feature type="strand" evidence="3">
    <location>
        <begin position="278"/>
        <end position="288"/>
    </location>
</feature>
<feature type="helix" evidence="3">
    <location>
        <begin position="297"/>
        <end position="304"/>
    </location>
</feature>
<feature type="turn" evidence="3">
    <location>
        <begin position="305"/>
        <end position="308"/>
    </location>
</feature>
<dbReference type="EC" id="2.1.2.9" evidence="1"/>
<dbReference type="EMBL" id="AE003852">
    <property type="protein sequence ID" value="AAF93223.1"/>
    <property type="molecule type" value="Genomic_DNA"/>
</dbReference>
<dbReference type="PIR" id="H82372">
    <property type="entry name" value="H82372"/>
</dbReference>
<dbReference type="RefSeq" id="NP_229704.1">
    <property type="nucleotide sequence ID" value="NC_002505.1"/>
</dbReference>
<dbReference type="RefSeq" id="WP_000083540.1">
    <property type="nucleotide sequence ID" value="NZ_LT906614.1"/>
</dbReference>
<dbReference type="PDB" id="3Q0I">
    <property type="method" value="X-ray"/>
    <property type="resolution" value="1.89 A"/>
    <property type="chains" value="A=1-315"/>
</dbReference>
<dbReference type="PDBsum" id="3Q0I"/>
<dbReference type="SMR" id="Q9KVU4"/>
<dbReference type="STRING" id="243277.VC_0045"/>
<dbReference type="DNASU" id="2614441"/>
<dbReference type="EnsemblBacteria" id="AAF93223">
    <property type="protein sequence ID" value="AAF93223"/>
    <property type="gene ID" value="VC_0045"/>
</dbReference>
<dbReference type="KEGG" id="vch:VC_0045"/>
<dbReference type="PATRIC" id="fig|243277.26.peg.44"/>
<dbReference type="eggNOG" id="COG0223">
    <property type="taxonomic scope" value="Bacteria"/>
</dbReference>
<dbReference type="HOGENOM" id="CLU_033347_1_2_6"/>
<dbReference type="EvolutionaryTrace" id="Q9KVU4"/>
<dbReference type="Proteomes" id="UP000000584">
    <property type="component" value="Chromosome 1"/>
</dbReference>
<dbReference type="GO" id="GO:0005829">
    <property type="term" value="C:cytosol"/>
    <property type="evidence" value="ECO:0000318"/>
    <property type="project" value="GO_Central"/>
</dbReference>
<dbReference type="GO" id="GO:0004479">
    <property type="term" value="F:methionyl-tRNA formyltransferase activity"/>
    <property type="evidence" value="ECO:0000318"/>
    <property type="project" value="GO_Central"/>
</dbReference>
<dbReference type="GO" id="GO:0071951">
    <property type="term" value="P:conversion of methionyl-tRNA to N-formyl-methionyl-tRNA"/>
    <property type="evidence" value="ECO:0000318"/>
    <property type="project" value="GO_Central"/>
</dbReference>
<dbReference type="CDD" id="cd08646">
    <property type="entry name" value="FMT_core_Met-tRNA-FMT_N"/>
    <property type="match status" value="1"/>
</dbReference>
<dbReference type="CDD" id="cd08704">
    <property type="entry name" value="Met_tRNA_FMT_C"/>
    <property type="match status" value="1"/>
</dbReference>
<dbReference type="FunFam" id="3.10.25.10:FF:000012">
    <property type="entry name" value="Methionyl-tRNA formyltransferase"/>
    <property type="match status" value="1"/>
</dbReference>
<dbReference type="FunFam" id="3.40.50.12230:FF:000001">
    <property type="entry name" value="Methionyl-tRNA formyltransferase"/>
    <property type="match status" value="1"/>
</dbReference>
<dbReference type="FunFam" id="3.40.50.170:FF:000003">
    <property type="entry name" value="Methionyl-tRNA formyltransferase"/>
    <property type="match status" value="1"/>
</dbReference>
<dbReference type="Gene3D" id="3.10.25.10">
    <property type="entry name" value="Formyl transferase, C-terminal domain"/>
    <property type="match status" value="1"/>
</dbReference>
<dbReference type="Gene3D" id="3.40.50.170">
    <property type="entry name" value="Formyl transferase, N-terminal domain"/>
    <property type="match status" value="1"/>
</dbReference>
<dbReference type="HAMAP" id="MF_00182">
    <property type="entry name" value="Formyl_trans"/>
    <property type="match status" value="1"/>
</dbReference>
<dbReference type="InterPro" id="IPR005794">
    <property type="entry name" value="Fmt"/>
</dbReference>
<dbReference type="InterPro" id="IPR005793">
    <property type="entry name" value="Formyl_trans_C"/>
</dbReference>
<dbReference type="InterPro" id="IPR037022">
    <property type="entry name" value="Formyl_trans_C_sf"/>
</dbReference>
<dbReference type="InterPro" id="IPR002376">
    <property type="entry name" value="Formyl_transf_N"/>
</dbReference>
<dbReference type="InterPro" id="IPR036477">
    <property type="entry name" value="Formyl_transf_N_sf"/>
</dbReference>
<dbReference type="InterPro" id="IPR011034">
    <property type="entry name" value="Formyl_transferase-like_C_sf"/>
</dbReference>
<dbReference type="InterPro" id="IPR001555">
    <property type="entry name" value="GART_AS"/>
</dbReference>
<dbReference type="InterPro" id="IPR044135">
    <property type="entry name" value="Met-tRNA-FMT_C"/>
</dbReference>
<dbReference type="InterPro" id="IPR041711">
    <property type="entry name" value="Met-tRNA-FMT_N"/>
</dbReference>
<dbReference type="NCBIfam" id="TIGR00460">
    <property type="entry name" value="fmt"/>
    <property type="match status" value="1"/>
</dbReference>
<dbReference type="PANTHER" id="PTHR11138">
    <property type="entry name" value="METHIONYL-TRNA FORMYLTRANSFERASE"/>
    <property type="match status" value="1"/>
</dbReference>
<dbReference type="PANTHER" id="PTHR11138:SF5">
    <property type="entry name" value="METHIONYL-TRNA FORMYLTRANSFERASE, MITOCHONDRIAL"/>
    <property type="match status" value="1"/>
</dbReference>
<dbReference type="Pfam" id="PF02911">
    <property type="entry name" value="Formyl_trans_C"/>
    <property type="match status" value="1"/>
</dbReference>
<dbReference type="Pfam" id="PF00551">
    <property type="entry name" value="Formyl_trans_N"/>
    <property type="match status" value="1"/>
</dbReference>
<dbReference type="SUPFAM" id="SSF50486">
    <property type="entry name" value="FMT C-terminal domain-like"/>
    <property type="match status" value="1"/>
</dbReference>
<dbReference type="SUPFAM" id="SSF53328">
    <property type="entry name" value="Formyltransferase"/>
    <property type="match status" value="1"/>
</dbReference>
<dbReference type="PROSITE" id="PS00373">
    <property type="entry name" value="GART"/>
    <property type="match status" value="1"/>
</dbReference>
<keyword id="KW-0002">3D-structure</keyword>
<keyword id="KW-0648">Protein biosynthesis</keyword>
<keyword id="KW-1185">Reference proteome</keyword>
<keyword id="KW-0808">Transferase</keyword>
<organism>
    <name type="scientific">Vibrio cholerae serotype O1 (strain ATCC 39315 / El Tor Inaba N16961)</name>
    <dbReference type="NCBI Taxonomy" id="243277"/>
    <lineage>
        <taxon>Bacteria</taxon>
        <taxon>Pseudomonadati</taxon>
        <taxon>Pseudomonadota</taxon>
        <taxon>Gammaproteobacteria</taxon>
        <taxon>Vibrionales</taxon>
        <taxon>Vibrionaceae</taxon>
        <taxon>Vibrio</taxon>
    </lineage>
</organism>
<sequence length="315" mass="34200">MSQSLRIVFAGTPDFAARHLAALLSSEHEIIAVYTQPERPAGRGKKLTASPVKTLALEHNVPVYQPENFKSDESKQQLAALNADLMVVVAYGLLLPKVVLDTPKLGCINVHGSILPRWRGAAPIQRSIWAGDSETGVTIMQMDVGLDTGDMLKIATLPIEASDTSASMYDKLAELGPQALLECLQDIAQGTAVAVKQDDGLANYAHKLSKEEARINWSDAATHIERCIRAFNPWPMSHFEVAENSIKVWQARVETRAVTQTPGTIIQADKSGIYVATGQDVLVLESLQIPGKKALPVQDILNARADWFSVGSQLS</sequence>
<protein>
    <recommendedName>
        <fullName evidence="1">Methionyl-tRNA formyltransferase</fullName>
        <ecNumber evidence="1">2.1.2.9</ecNumber>
    </recommendedName>
</protein>